<keyword id="KW-0030">Aminoacyl-tRNA synthetase</keyword>
<keyword id="KW-0067">ATP-binding</keyword>
<keyword id="KW-0963">Cytoplasm</keyword>
<keyword id="KW-0436">Ligase</keyword>
<keyword id="KW-0547">Nucleotide-binding</keyword>
<keyword id="KW-0648">Protein biosynthesis</keyword>
<keyword id="KW-1185">Reference proteome</keyword>
<gene>
    <name evidence="1" type="primary">glyS</name>
    <name type="ordered locus">lmo1458</name>
</gene>
<organism>
    <name type="scientific">Listeria monocytogenes serovar 1/2a (strain ATCC BAA-679 / EGD-e)</name>
    <dbReference type="NCBI Taxonomy" id="169963"/>
    <lineage>
        <taxon>Bacteria</taxon>
        <taxon>Bacillati</taxon>
        <taxon>Bacillota</taxon>
        <taxon>Bacilli</taxon>
        <taxon>Bacillales</taxon>
        <taxon>Listeriaceae</taxon>
        <taxon>Listeria</taxon>
    </lineage>
</organism>
<comment type="catalytic activity">
    <reaction evidence="1">
        <text>tRNA(Gly) + glycine + ATP = glycyl-tRNA(Gly) + AMP + diphosphate</text>
        <dbReference type="Rhea" id="RHEA:16013"/>
        <dbReference type="Rhea" id="RHEA-COMP:9664"/>
        <dbReference type="Rhea" id="RHEA-COMP:9683"/>
        <dbReference type="ChEBI" id="CHEBI:30616"/>
        <dbReference type="ChEBI" id="CHEBI:33019"/>
        <dbReference type="ChEBI" id="CHEBI:57305"/>
        <dbReference type="ChEBI" id="CHEBI:78442"/>
        <dbReference type="ChEBI" id="CHEBI:78522"/>
        <dbReference type="ChEBI" id="CHEBI:456215"/>
        <dbReference type="EC" id="6.1.1.14"/>
    </reaction>
</comment>
<comment type="subunit">
    <text evidence="1">Tetramer of two alpha and two beta subunits.</text>
</comment>
<comment type="subcellular location">
    <subcellularLocation>
        <location evidence="1">Cytoplasm</location>
    </subcellularLocation>
</comment>
<comment type="similarity">
    <text evidence="1">Belongs to the class-II aminoacyl-tRNA synthetase family.</text>
</comment>
<dbReference type="EC" id="6.1.1.14" evidence="1"/>
<dbReference type="EMBL" id="AL591979">
    <property type="protein sequence ID" value="CAC99536.1"/>
    <property type="molecule type" value="Genomic_DNA"/>
</dbReference>
<dbReference type="PIR" id="AB1257">
    <property type="entry name" value="AB1257"/>
</dbReference>
<dbReference type="RefSeq" id="NP_464983.1">
    <property type="nucleotide sequence ID" value="NC_003210.1"/>
</dbReference>
<dbReference type="RefSeq" id="WP_010990131.1">
    <property type="nucleotide sequence ID" value="NZ_CP149495.1"/>
</dbReference>
<dbReference type="SMR" id="Q8Y754"/>
<dbReference type="STRING" id="169963.gene:17594115"/>
<dbReference type="PaxDb" id="169963-lmo1458"/>
<dbReference type="EnsemblBacteria" id="CAC99536">
    <property type="protein sequence ID" value="CAC99536"/>
    <property type="gene ID" value="CAC99536"/>
</dbReference>
<dbReference type="GeneID" id="987668"/>
<dbReference type="KEGG" id="lmo:lmo1458"/>
<dbReference type="PATRIC" id="fig|169963.11.peg.1497"/>
<dbReference type="eggNOG" id="COG0751">
    <property type="taxonomic scope" value="Bacteria"/>
</dbReference>
<dbReference type="HOGENOM" id="CLU_007220_2_2_9"/>
<dbReference type="OrthoDB" id="9775440at2"/>
<dbReference type="PhylomeDB" id="Q8Y754"/>
<dbReference type="BioCyc" id="LMON169963:LMO1458-MONOMER"/>
<dbReference type="Proteomes" id="UP000000817">
    <property type="component" value="Chromosome"/>
</dbReference>
<dbReference type="GO" id="GO:0005829">
    <property type="term" value="C:cytosol"/>
    <property type="evidence" value="ECO:0000318"/>
    <property type="project" value="GO_Central"/>
</dbReference>
<dbReference type="GO" id="GO:0005524">
    <property type="term" value="F:ATP binding"/>
    <property type="evidence" value="ECO:0007669"/>
    <property type="project" value="UniProtKB-UniRule"/>
</dbReference>
<dbReference type="GO" id="GO:0004820">
    <property type="term" value="F:glycine-tRNA ligase activity"/>
    <property type="evidence" value="ECO:0007669"/>
    <property type="project" value="UniProtKB-UniRule"/>
</dbReference>
<dbReference type="GO" id="GO:0006426">
    <property type="term" value="P:glycyl-tRNA aminoacylation"/>
    <property type="evidence" value="ECO:0007669"/>
    <property type="project" value="UniProtKB-UniRule"/>
</dbReference>
<dbReference type="HAMAP" id="MF_00255">
    <property type="entry name" value="Gly_tRNA_synth_beta"/>
    <property type="match status" value="1"/>
</dbReference>
<dbReference type="InterPro" id="IPR015944">
    <property type="entry name" value="Gly-tRNA-synth_bsu"/>
</dbReference>
<dbReference type="InterPro" id="IPR006194">
    <property type="entry name" value="Gly-tRNA-synth_heterodimer"/>
</dbReference>
<dbReference type="NCBIfam" id="TIGR00211">
    <property type="entry name" value="glyS"/>
    <property type="match status" value="1"/>
</dbReference>
<dbReference type="PANTHER" id="PTHR30075:SF2">
    <property type="entry name" value="GLYCINE--TRNA LIGASE, CHLOROPLASTIC_MITOCHONDRIAL 2"/>
    <property type="match status" value="1"/>
</dbReference>
<dbReference type="PANTHER" id="PTHR30075">
    <property type="entry name" value="GLYCYL-TRNA SYNTHETASE"/>
    <property type="match status" value="1"/>
</dbReference>
<dbReference type="Pfam" id="PF02092">
    <property type="entry name" value="tRNA_synt_2f"/>
    <property type="match status" value="1"/>
</dbReference>
<dbReference type="PRINTS" id="PR01045">
    <property type="entry name" value="TRNASYNTHGB"/>
</dbReference>
<dbReference type="SUPFAM" id="SSF109604">
    <property type="entry name" value="HD-domain/PDEase-like"/>
    <property type="match status" value="1"/>
</dbReference>
<dbReference type="PROSITE" id="PS50861">
    <property type="entry name" value="AA_TRNA_LIGASE_II_GLYAB"/>
    <property type="match status" value="1"/>
</dbReference>
<name>SYGB_LISMO</name>
<accession>Q8Y754</accession>
<feature type="chain" id="PRO_0000072912" description="Glycine--tRNA ligase beta subunit">
    <location>
        <begin position="1"/>
        <end position="688"/>
    </location>
</feature>
<protein>
    <recommendedName>
        <fullName evidence="1">Glycine--tRNA ligase beta subunit</fullName>
        <ecNumber evidence="1">6.1.1.14</ecNumber>
    </recommendedName>
    <alternativeName>
        <fullName evidence="1">Glycyl-tRNA synthetase beta subunit</fullName>
        <shortName evidence="1">GlyRS</shortName>
    </alternativeName>
</protein>
<evidence type="ECO:0000255" key="1">
    <source>
        <dbReference type="HAMAP-Rule" id="MF_00255"/>
    </source>
</evidence>
<reference key="1">
    <citation type="journal article" date="2001" name="Science">
        <title>Comparative genomics of Listeria species.</title>
        <authorList>
            <person name="Glaser P."/>
            <person name="Frangeul L."/>
            <person name="Buchrieser C."/>
            <person name="Rusniok C."/>
            <person name="Amend A."/>
            <person name="Baquero F."/>
            <person name="Berche P."/>
            <person name="Bloecker H."/>
            <person name="Brandt P."/>
            <person name="Chakraborty T."/>
            <person name="Charbit A."/>
            <person name="Chetouani F."/>
            <person name="Couve E."/>
            <person name="de Daruvar A."/>
            <person name="Dehoux P."/>
            <person name="Domann E."/>
            <person name="Dominguez-Bernal G."/>
            <person name="Duchaud E."/>
            <person name="Durant L."/>
            <person name="Dussurget O."/>
            <person name="Entian K.-D."/>
            <person name="Fsihi H."/>
            <person name="Garcia-del Portillo F."/>
            <person name="Garrido P."/>
            <person name="Gautier L."/>
            <person name="Goebel W."/>
            <person name="Gomez-Lopez N."/>
            <person name="Hain T."/>
            <person name="Hauf J."/>
            <person name="Jackson D."/>
            <person name="Jones L.-M."/>
            <person name="Kaerst U."/>
            <person name="Kreft J."/>
            <person name="Kuhn M."/>
            <person name="Kunst F."/>
            <person name="Kurapkat G."/>
            <person name="Madueno E."/>
            <person name="Maitournam A."/>
            <person name="Mata Vicente J."/>
            <person name="Ng E."/>
            <person name="Nedjari H."/>
            <person name="Nordsiek G."/>
            <person name="Novella S."/>
            <person name="de Pablos B."/>
            <person name="Perez-Diaz J.-C."/>
            <person name="Purcell R."/>
            <person name="Remmel B."/>
            <person name="Rose M."/>
            <person name="Schlueter T."/>
            <person name="Simoes N."/>
            <person name="Tierrez A."/>
            <person name="Vazquez-Boland J.-A."/>
            <person name="Voss H."/>
            <person name="Wehland J."/>
            <person name="Cossart P."/>
        </authorList>
    </citation>
    <scope>NUCLEOTIDE SEQUENCE [LARGE SCALE GENOMIC DNA]</scope>
    <source>
        <strain>ATCC BAA-679 / EGD-e</strain>
    </source>
</reference>
<sequence length="688" mass="78508">MSKDFLLEIGLEEMPAQYVTSSVLQLEKRVTDWLTENKIEFGEIKTYSTPRRLTVLVEGMAEEQANRVEEAKGPAKKIALDEEGNWSKAALGFAKSQKVDPADLTFRDIKGVEYIYIKKEVIGEKTSTLLPSLEKVVTSMTFPVSMHWGSNDLRYIRPIKWLIAMFDEEIIPFEITGVTTSNTSRGHRFLGKSATIKQPSDYPNALLEQFVVVNAEERKQAIVEQLRELESMENWQIKEDDDLLEEVTNLVEYPTVLSGNFEKEYLELPEEVLITTMKEHQRYFPVFSQAGELLPHFVTVRNGNHENLDTVARGNEKVLRARLSDADFFYQEDLKMTIDEAVAKLQNIVFHEKLGTLTEKMKRVQKVALMLADYLDWQEEDKQDIIRLTNIYKFDLVTNIVGEFPELQGLMGEKYALLQGEKPAIATAIREHYLPNSAEGELPQTDLGSLIAIADKLETLIGFFCVNIVPTGSADPFGLRRSAFGAMRIIQANGWNIPMLEVISRIVDMERAEGSTELPDADVKKEVQTFLKNRLRVILQGHHIRHDIIDAVIGGDPNVIPQLIDRAQILNEHAEAEWFRPTIEALSRVVKIAKKYEDGVEVDPALFENEYEQALFDKLEKLKFDYAGLTIIERLKAFADLRTTIDAYFDNTLVMSDNDELKNNRLALLFELASFIKEFAQMDEINVK</sequence>
<proteinExistence type="inferred from homology"/>